<reference key="1">
    <citation type="journal article" date="2007" name="Comp. Biochem. Physiol.">
        <title>Molecular characterization and expression of the cholesteryl ester transfer protein gene in chickens.</title>
        <authorList>
            <person name="Sato K."/>
            <person name="Ohuchi A."/>
            <person name="Sato T."/>
            <person name="Schneider W.J."/>
            <person name="Akiba Y."/>
        </authorList>
    </citation>
    <scope>NUCLEOTIDE SEQUENCE [MRNA]</scope>
    <scope>FUNCTION</scope>
    <scope>TISSUE SPECIFICITY</scope>
    <scope>DEVELOPMENTAL STAGE</scope>
    <scope>INDUCTION</scope>
</reference>
<protein>
    <recommendedName>
        <fullName evidence="5">Cholesteryl ester transfer protein</fullName>
    </recommendedName>
</protein>
<feature type="signal peptide" evidence="1">
    <location>
        <begin position="1"/>
        <end position="24"/>
    </location>
</feature>
<feature type="chain" id="PRO_0000394151" description="Cholesteryl ester transfer protein" evidence="1">
    <location>
        <begin position="25"/>
        <end position="505"/>
    </location>
</feature>
<feature type="glycosylation site" description="N-linked (GlcNAc...) asparagine" evidence="3">
    <location>
        <position position="68"/>
    </location>
</feature>
<feature type="glycosylation site" description="N-linked (GlcNAc...) asparagine" evidence="3">
    <location>
        <position position="114"/>
    </location>
</feature>
<feature type="glycosylation site" description="N-linked (GlcNAc...) asparagine" evidence="3">
    <location>
        <position position="266"/>
    </location>
</feature>
<feature type="glycosylation site" description="N-linked (GlcNAc...) asparagine" evidence="3">
    <location>
        <position position="344"/>
    </location>
</feature>
<feature type="glycosylation site" description="N-linked (GlcNAc...) asparagine" evidence="3">
    <location>
        <position position="422"/>
    </location>
</feature>
<feature type="disulfide bond" evidence="2">
    <location>
        <begin position="169"/>
        <end position="210"/>
    </location>
</feature>
<accession>Q3V6R6</accession>
<keyword id="KW-0153">Cholesterol metabolism</keyword>
<keyword id="KW-1015">Disulfide bond</keyword>
<keyword id="KW-0325">Glycoprotein</keyword>
<keyword id="KW-0443">Lipid metabolism</keyword>
<keyword id="KW-0445">Lipid transport</keyword>
<keyword id="KW-1185">Reference proteome</keyword>
<keyword id="KW-0964">Secreted</keyword>
<keyword id="KW-0732">Signal</keyword>
<keyword id="KW-0753">Steroid metabolism</keyword>
<keyword id="KW-1207">Sterol metabolism</keyword>
<keyword id="KW-0813">Transport</keyword>
<proteinExistence type="evidence at transcript level"/>
<sequence>MLWAGGMRLGMARILLMLVHAAAACEFGPMPYSVTGIVFRMTKPAALLLNQETARLIQASFKHAKFPNITGERSMRFLGTVAYTLANIQVSDLSIEQSEVELKENDAIDIAIKNVTAFFRGTLTYGYAGAWFLQLFHSVDFEIQSSIDLQINIKLLCQEEQVAADASDCYLSFHKLMLHLQGDKEPGWLKQLFTDFISFTLKFVLKRELCKEINLLAQVMANFVHNVAENFVQDEAIGLDISLASDPLIKANYLESHHEGLVLYKNYSDVLSDSVFSPSLLSESRMLYFWISEHILNSLASAAFLDGRLVLAIRGEKLQALFEFEDTEAQQKAVHLIFQGNSYNDSVAKVWSLALPEISLQPEGTVVKSLVAVEISIFPPGEEPLTALYMEEEITVTIQAAYVEKKLILRPVDSQIEFKVFNCTADPSGNDQSVRNFLQKMISAVGIPEVISKIEPALTSLMNSKGLHLFEIKNPEIITRKRYLIVQLDFSFPNHLLLDFLEKTL</sequence>
<comment type="function">
    <text evidence="2 4">Involved in the transfer of neutral lipids, including cholesteryl ester and triglyceride, among lipoprotein particles. Allows the net movement of cholesteryl ester from high density lipoproteins/HDL to triglyceride-rich very low density lipoproteins/VLDL, and the equimolar transport of triglyceride from VLDL to HDL (PubMed:17574888). Regulates the reverse cholesterol transport, by which excess cholesterol is removed from peripheral tissues and returned to the liver for elimination (By similarity).</text>
</comment>
<comment type="catalytic activity">
    <reaction evidence="2">
        <text>cholesteryl (9Z-octadecenoate)(in) = cholesteryl (9Z-octadecenoate)(out)</text>
        <dbReference type="Rhea" id="RHEA:43348"/>
        <dbReference type="ChEBI" id="CHEBI:46898"/>
    </reaction>
</comment>
<comment type="catalytic activity">
    <reaction evidence="2">
        <text>1,2,3-tri-(9Z-octadecenoyl)-glycerol(in) = 1,2,3-tri-(9Z-octadecenoyl)-glycerol(out)</text>
        <dbReference type="Rhea" id="RHEA:43352"/>
        <dbReference type="ChEBI" id="CHEBI:53753"/>
    </reaction>
</comment>
<comment type="catalytic activity">
    <reaction evidence="2">
        <text>cholesteryl (9Z,12Z)-octadecadienoate(in) = cholesteryl (9Z,12Z)-octadecadienoate(out)</text>
        <dbReference type="Rhea" id="RHEA:43356"/>
        <dbReference type="ChEBI" id="CHEBI:41509"/>
    </reaction>
</comment>
<comment type="subcellular location">
    <subcellularLocation>
        <location evidence="2">Secreted</location>
    </subcellularLocation>
    <text evidence="2">Secreted in plasma.</text>
</comment>
<comment type="tissue specificity">
    <text evidence="4">Highly expressed in liver brain, heart, and spleen. Secreted in plasma.</text>
</comment>
<comment type="developmental stage">
    <text evidence="4">Expression is significantly lower in mature (egg-laying) females than in immature female, but unaffected by age in males.</text>
</comment>
<comment type="induction">
    <text evidence="4">Expression increases following dietary supplementation with cholesterol. Expression decreases following dietary supplementation with estradiol.</text>
</comment>
<comment type="similarity">
    <text evidence="6">Belongs to the BPI/LBP/Plunc superfamily. BPI/LBP family.</text>
</comment>
<name>CETP_CHICK</name>
<dbReference type="EMBL" id="AB205527">
    <property type="protein sequence ID" value="BAE43960.1"/>
    <property type="molecule type" value="mRNA"/>
</dbReference>
<dbReference type="SMR" id="Q3V6R6"/>
<dbReference type="FunCoup" id="Q3V6R6">
    <property type="interactions" value="6"/>
</dbReference>
<dbReference type="STRING" id="9031.ENSGALP00000001869"/>
<dbReference type="GlyCosmos" id="Q3V6R6">
    <property type="glycosylation" value="5 sites, No reported glycans"/>
</dbReference>
<dbReference type="GlyGen" id="Q3V6R6">
    <property type="glycosylation" value="5 sites"/>
</dbReference>
<dbReference type="PaxDb" id="9031-ENSGALP00000001869"/>
<dbReference type="VEuPathDB" id="HostDB:geneid_415645"/>
<dbReference type="eggNOG" id="KOG4160">
    <property type="taxonomic scope" value="Eukaryota"/>
</dbReference>
<dbReference type="InParanoid" id="Q3V6R6"/>
<dbReference type="OrthoDB" id="9940758at2759"/>
<dbReference type="PhylomeDB" id="Q3V6R6"/>
<dbReference type="Proteomes" id="UP000000539">
    <property type="component" value="Unassembled WGS sequence"/>
</dbReference>
<dbReference type="GO" id="GO:0005615">
    <property type="term" value="C:extracellular space"/>
    <property type="evidence" value="ECO:0000250"/>
    <property type="project" value="UniProtKB"/>
</dbReference>
<dbReference type="GO" id="GO:0034364">
    <property type="term" value="C:high-density lipoprotein particle"/>
    <property type="evidence" value="ECO:0000318"/>
    <property type="project" value="GO_Central"/>
</dbReference>
<dbReference type="GO" id="GO:0015485">
    <property type="term" value="F:cholesterol binding"/>
    <property type="evidence" value="ECO:0000318"/>
    <property type="project" value="GO_Central"/>
</dbReference>
<dbReference type="GO" id="GO:0120020">
    <property type="term" value="F:cholesterol transfer activity"/>
    <property type="evidence" value="ECO:0000250"/>
    <property type="project" value="UniProtKB"/>
</dbReference>
<dbReference type="GO" id="GO:0031210">
    <property type="term" value="F:phosphatidylcholine binding"/>
    <property type="evidence" value="ECO:0000318"/>
    <property type="project" value="GO_Central"/>
</dbReference>
<dbReference type="GO" id="GO:0005548">
    <property type="term" value="F:phospholipid transporter activity"/>
    <property type="evidence" value="ECO:0000318"/>
    <property type="project" value="GO_Central"/>
</dbReference>
<dbReference type="GO" id="GO:0017129">
    <property type="term" value="F:triglyceride binding"/>
    <property type="evidence" value="ECO:0000318"/>
    <property type="project" value="GO_Central"/>
</dbReference>
<dbReference type="GO" id="GO:0042632">
    <property type="term" value="P:cholesterol homeostasis"/>
    <property type="evidence" value="ECO:0000318"/>
    <property type="project" value="GO_Central"/>
</dbReference>
<dbReference type="GO" id="GO:0008203">
    <property type="term" value="P:cholesterol metabolic process"/>
    <property type="evidence" value="ECO:0000318"/>
    <property type="project" value="GO_Central"/>
</dbReference>
<dbReference type="GO" id="GO:0030301">
    <property type="term" value="P:cholesterol transport"/>
    <property type="evidence" value="ECO:0000250"/>
    <property type="project" value="UniProtKB"/>
</dbReference>
<dbReference type="GO" id="GO:0034375">
    <property type="term" value="P:high-density lipoprotein particle remodeling"/>
    <property type="evidence" value="ECO:0000250"/>
    <property type="project" value="UniProtKB"/>
</dbReference>
<dbReference type="GO" id="GO:0034374">
    <property type="term" value="P:low-density lipoprotein particle remodeling"/>
    <property type="evidence" value="ECO:0000318"/>
    <property type="project" value="GO_Central"/>
</dbReference>
<dbReference type="GO" id="GO:0046470">
    <property type="term" value="P:phosphatidylcholine metabolic process"/>
    <property type="evidence" value="ECO:0000318"/>
    <property type="project" value="GO_Central"/>
</dbReference>
<dbReference type="GO" id="GO:0055091">
    <property type="term" value="P:phospholipid homeostasis"/>
    <property type="evidence" value="ECO:0000318"/>
    <property type="project" value="GO_Central"/>
</dbReference>
<dbReference type="GO" id="GO:0043691">
    <property type="term" value="P:reverse cholesterol transport"/>
    <property type="evidence" value="ECO:0007669"/>
    <property type="project" value="InterPro"/>
</dbReference>
<dbReference type="GO" id="GO:0070328">
    <property type="term" value="P:triglyceride homeostasis"/>
    <property type="evidence" value="ECO:0000318"/>
    <property type="project" value="GO_Central"/>
</dbReference>
<dbReference type="GO" id="GO:0006641">
    <property type="term" value="P:triglyceride metabolic process"/>
    <property type="evidence" value="ECO:0000318"/>
    <property type="project" value="GO_Central"/>
</dbReference>
<dbReference type="GO" id="GO:0034197">
    <property type="term" value="P:triglyceride transport"/>
    <property type="evidence" value="ECO:0000250"/>
    <property type="project" value="UniProtKB"/>
</dbReference>
<dbReference type="GO" id="GO:0034372">
    <property type="term" value="P:very-low-density lipoprotein particle remodeling"/>
    <property type="evidence" value="ECO:0000250"/>
    <property type="project" value="UniProtKB"/>
</dbReference>
<dbReference type="CDD" id="cd00025">
    <property type="entry name" value="BPI1"/>
    <property type="match status" value="1"/>
</dbReference>
<dbReference type="FunFam" id="3.15.10.10:FF:000002">
    <property type="entry name" value="Cholesteryl ester transfer protein"/>
    <property type="match status" value="1"/>
</dbReference>
<dbReference type="FunFam" id="3.15.20.10:FF:000002">
    <property type="entry name" value="Cholesteryl ester transfer protein"/>
    <property type="match status" value="1"/>
</dbReference>
<dbReference type="Gene3D" id="3.15.10.10">
    <property type="entry name" value="Bactericidal permeability-increasing protein, domain 1"/>
    <property type="match status" value="1"/>
</dbReference>
<dbReference type="Gene3D" id="3.15.20.10">
    <property type="entry name" value="Bactericidal permeability-increasing protein, domain 2"/>
    <property type="match status" value="1"/>
</dbReference>
<dbReference type="InterPro" id="IPR017943">
    <property type="entry name" value="Bactericidal_perm-incr_a/b_dom"/>
</dbReference>
<dbReference type="InterPro" id="IPR017130">
    <property type="entry name" value="Cholesteryl_ester_transfer"/>
</dbReference>
<dbReference type="InterPro" id="IPR001124">
    <property type="entry name" value="Lipid-bd_serum_glycop_C"/>
</dbReference>
<dbReference type="InterPro" id="IPR017942">
    <property type="entry name" value="Lipid-bd_serum_glycop_N"/>
</dbReference>
<dbReference type="PANTHER" id="PTHR47616">
    <property type="entry name" value="CHOLESTERYL ESTER TRANSFER PROTEIN"/>
    <property type="match status" value="1"/>
</dbReference>
<dbReference type="PANTHER" id="PTHR47616:SF1">
    <property type="entry name" value="CHOLESTERYL ESTER TRANSFER PROTEIN"/>
    <property type="match status" value="1"/>
</dbReference>
<dbReference type="Pfam" id="PF01273">
    <property type="entry name" value="LBP_BPI_CETP"/>
    <property type="match status" value="1"/>
</dbReference>
<dbReference type="Pfam" id="PF02886">
    <property type="entry name" value="LBP_BPI_CETP_C"/>
    <property type="match status" value="1"/>
</dbReference>
<dbReference type="PIRSF" id="PIRSF037185">
    <property type="entry name" value="Cholesteryl_ester_transf"/>
    <property type="match status" value="1"/>
</dbReference>
<dbReference type="SMART" id="SM00328">
    <property type="entry name" value="BPI1"/>
    <property type="match status" value="1"/>
</dbReference>
<dbReference type="SMART" id="SM00329">
    <property type="entry name" value="BPI2"/>
    <property type="match status" value="1"/>
</dbReference>
<dbReference type="SUPFAM" id="SSF55394">
    <property type="entry name" value="Bactericidal permeability-increasing protein, BPI"/>
    <property type="match status" value="2"/>
</dbReference>
<evidence type="ECO:0000250" key="1"/>
<evidence type="ECO:0000250" key="2">
    <source>
        <dbReference type="UniProtKB" id="P11597"/>
    </source>
</evidence>
<evidence type="ECO:0000255" key="3"/>
<evidence type="ECO:0000269" key="4">
    <source>
    </source>
</evidence>
<evidence type="ECO:0000303" key="5">
    <source>
    </source>
</evidence>
<evidence type="ECO:0000305" key="6"/>
<organism>
    <name type="scientific">Gallus gallus</name>
    <name type="common">Chicken</name>
    <dbReference type="NCBI Taxonomy" id="9031"/>
    <lineage>
        <taxon>Eukaryota</taxon>
        <taxon>Metazoa</taxon>
        <taxon>Chordata</taxon>
        <taxon>Craniata</taxon>
        <taxon>Vertebrata</taxon>
        <taxon>Euteleostomi</taxon>
        <taxon>Archelosauria</taxon>
        <taxon>Archosauria</taxon>
        <taxon>Dinosauria</taxon>
        <taxon>Saurischia</taxon>
        <taxon>Theropoda</taxon>
        <taxon>Coelurosauria</taxon>
        <taxon>Aves</taxon>
        <taxon>Neognathae</taxon>
        <taxon>Galloanserae</taxon>
        <taxon>Galliformes</taxon>
        <taxon>Phasianidae</taxon>
        <taxon>Phasianinae</taxon>
        <taxon>Gallus</taxon>
    </lineage>
</organism>
<gene>
    <name evidence="6" type="primary">CETP</name>
</gene>